<organism>
    <name type="scientific">Homo sapiens</name>
    <name type="common">Human</name>
    <dbReference type="NCBI Taxonomy" id="9606"/>
    <lineage>
        <taxon>Eukaryota</taxon>
        <taxon>Metazoa</taxon>
        <taxon>Chordata</taxon>
        <taxon>Craniata</taxon>
        <taxon>Vertebrata</taxon>
        <taxon>Euteleostomi</taxon>
        <taxon>Mammalia</taxon>
        <taxon>Eutheria</taxon>
        <taxon>Euarchontoglires</taxon>
        <taxon>Primates</taxon>
        <taxon>Haplorrhini</taxon>
        <taxon>Catarrhini</taxon>
        <taxon>Hominidae</taxon>
        <taxon>Homo</taxon>
    </lineage>
</organism>
<sequence>MWQPRRPWPRVPWRWALALLALVGAGLCHAGPQPGYPARPSARNKNWCAYIVNKNVSCSVLEGSESFIQAQYNCAWNQMPCPSALVYRVNFRPRYVTRYKTVTQLEWRCCPGFRGGDCQEGPKDPVKTLRPTPARPRNSLKKATDNEPSQFSEPRKTLSPTGTAQPSWGVDPKEGPQELQEKKIQVLEEKVLRLTRTVLDLQSSLAGVSENLKHATQDDASRTRAPGLSSQHPKPDTTVSGDTETGQSPGVFNTKESGMKDIKSELAEVKDTLKNKSDKLEELDGKVKGYEGQLRQLQEAAQGPTVTMTTNELYQAYVDSKIDALREELMEGMDRKLADLKNSCEYKLTGLQQQCDDYGSSYLGVIELIGEKETSLRKEINNLRARLQEPSAQANCCDSEKNGDIGQQIKTLDQKIERVAEATRMLNGRLDNEFDRLIVPEPDVDFDAKWNELDARINVTEKNAEEHCFYIEETLRGAINGEVGDLKQLVDQKIQSLEDRLGSVLLQMTNNTGAELSPPGAAALPGVSGSGDERVMMELNHLKDKVQVVEDICLLNIQGKPHGMEGALPNREDRAVRDSLHLLKSLNDTMHRKFQETEQTIQKLQQDFSFLYSQLNHTENDVTHLQKEMSNCRAGENAGMGRFTKVGEQERTVDTLPSPQHPVAHCCSQLEERWQRLQSQVISELDACKECTQGVQREVSMVEGRVSHMEKTCSKLDSISGNLQRIKEGLNKHVSSLWNCVRQMNGTLRSHSRDISGLKNSVQQFYSHVFQISTDLQDLVKFQPSAKAPSPPPPAEAPKEPLQPEPAPPRPSGPATAEDPGRRPVLPQRPPEERPPQPPGSTGVIAETGQAGPPAGAGVSGRGLPRGVDGQTGSGTVPGAEGFAGAPGYPKSPPVASPGAPVPSLVSFSAGLTQKPFPSDGGVVLFNKVLVNDGDVYNPSTGVFTAPYDGRYLITATLTPERDAYVEAVLSVSNASVAQLHTAGYRREFLEYHRPPGALHTCGGPGAFHLIVHLKAGDAVNVVVTGGKLAHTDFDEMYSTFSGVFLYPFLSHL</sequence>
<evidence type="ECO:0000250" key="1"/>
<evidence type="ECO:0000255" key="2"/>
<evidence type="ECO:0000255" key="3">
    <source>
        <dbReference type="PROSITE-ProRule" id="PRU00368"/>
    </source>
</evidence>
<evidence type="ECO:0000255" key="4">
    <source>
        <dbReference type="PROSITE-ProRule" id="PRU00384"/>
    </source>
</evidence>
<evidence type="ECO:0000256" key="5">
    <source>
        <dbReference type="SAM" id="MobiDB-lite"/>
    </source>
</evidence>
<evidence type="ECO:0000269" key="6">
    <source>
    </source>
</evidence>
<evidence type="ECO:0000269" key="7">
    <source>
    </source>
</evidence>
<evidence type="ECO:0000305" key="8"/>
<name>EMIL2_HUMAN</name>
<keyword id="KW-0130">Cell adhesion</keyword>
<keyword id="KW-0175">Coiled coil</keyword>
<keyword id="KW-0176">Collagen</keyword>
<keyword id="KW-1015">Disulfide bond</keyword>
<keyword id="KW-0272">Extracellular matrix</keyword>
<keyword id="KW-0325">Glycoprotein</keyword>
<keyword id="KW-1267">Proteomics identification</keyword>
<keyword id="KW-1185">Reference proteome</keyword>
<keyword id="KW-0964">Secreted</keyword>
<keyword id="KW-0732">Signal</keyword>
<dbReference type="EMBL" id="AF270513">
    <property type="protein sequence ID" value="AAK37963.1"/>
    <property type="molecule type" value="mRNA"/>
</dbReference>
<dbReference type="EMBL" id="AP000919">
    <property type="status" value="NOT_ANNOTATED_CDS"/>
    <property type="molecule type" value="Genomic_DNA"/>
</dbReference>
<dbReference type="EMBL" id="AP001011">
    <property type="status" value="NOT_ANNOTATED_CDS"/>
    <property type="molecule type" value="Genomic_DNA"/>
</dbReference>
<dbReference type="EMBL" id="CH471113">
    <property type="protein sequence ID" value="EAX01690.1"/>
    <property type="molecule type" value="Genomic_DNA"/>
</dbReference>
<dbReference type="EMBL" id="BC136541">
    <property type="protein sequence ID" value="AAI36542.1"/>
    <property type="molecule type" value="mRNA"/>
</dbReference>
<dbReference type="EMBL" id="AK090519">
    <property type="protein sequence ID" value="BAC03470.1"/>
    <property type="molecule type" value="mRNA"/>
</dbReference>
<dbReference type="EMBL" id="AB026706">
    <property type="protein sequence ID" value="BAB61020.1"/>
    <property type="molecule type" value="mRNA"/>
</dbReference>
<dbReference type="CCDS" id="CCDS11828.1"/>
<dbReference type="RefSeq" id="NP_114437.2">
    <property type="nucleotide sequence ID" value="NM_032048.3"/>
</dbReference>
<dbReference type="SMR" id="Q9BXX0"/>
<dbReference type="BioGRID" id="123848">
    <property type="interactions" value="27"/>
</dbReference>
<dbReference type="ComplexPortal" id="CPX-436">
    <property type="entry name" value="EMILIN-2 complex"/>
</dbReference>
<dbReference type="FunCoup" id="Q9BXX0">
    <property type="interactions" value="342"/>
</dbReference>
<dbReference type="IntAct" id="Q9BXX0">
    <property type="interactions" value="24"/>
</dbReference>
<dbReference type="STRING" id="9606.ENSP00000254528"/>
<dbReference type="GlyCosmos" id="Q9BXX0">
    <property type="glycosylation" value="21 sites, 3 glycans"/>
</dbReference>
<dbReference type="GlyGen" id="Q9BXX0">
    <property type="glycosylation" value="28 sites, 20 N-linked glycans (7 sites), 5 O-linked glycans (17 sites)"/>
</dbReference>
<dbReference type="iPTMnet" id="Q9BXX0"/>
<dbReference type="PhosphoSitePlus" id="Q9BXX0"/>
<dbReference type="BioMuta" id="EMILIN2"/>
<dbReference type="DMDM" id="296439365"/>
<dbReference type="jPOST" id="Q9BXX0"/>
<dbReference type="MassIVE" id="Q9BXX0"/>
<dbReference type="PaxDb" id="9606-ENSP00000254528"/>
<dbReference type="PeptideAtlas" id="Q9BXX0"/>
<dbReference type="ProteomicsDB" id="79535"/>
<dbReference type="Pumba" id="Q9BXX0"/>
<dbReference type="Antibodypedia" id="21912">
    <property type="antibodies" value="54 antibodies from 16 providers"/>
</dbReference>
<dbReference type="DNASU" id="84034"/>
<dbReference type="Ensembl" id="ENST00000254528.4">
    <property type="protein sequence ID" value="ENSP00000254528.3"/>
    <property type="gene ID" value="ENSG00000132205.11"/>
</dbReference>
<dbReference type="GeneID" id="84034"/>
<dbReference type="KEGG" id="hsa:84034"/>
<dbReference type="MANE-Select" id="ENST00000254528.4">
    <property type="protein sequence ID" value="ENSP00000254528.3"/>
    <property type="RefSeq nucleotide sequence ID" value="NM_032048.3"/>
    <property type="RefSeq protein sequence ID" value="NP_114437.2"/>
</dbReference>
<dbReference type="UCSC" id="uc002kln.4">
    <property type="organism name" value="human"/>
</dbReference>
<dbReference type="AGR" id="HGNC:19881"/>
<dbReference type="CTD" id="84034"/>
<dbReference type="DisGeNET" id="84034"/>
<dbReference type="GeneCards" id="EMILIN2"/>
<dbReference type="HGNC" id="HGNC:19881">
    <property type="gene designation" value="EMILIN2"/>
</dbReference>
<dbReference type="HPA" id="ENSG00000132205">
    <property type="expression patterns" value="Tissue enhanced (parathyroid)"/>
</dbReference>
<dbReference type="MIM" id="608928">
    <property type="type" value="gene"/>
</dbReference>
<dbReference type="neXtProt" id="NX_Q9BXX0"/>
<dbReference type="OpenTargets" id="ENSG00000132205"/>
<dbReference type="PharmGKB" id="PA134880588"/>
<dbReference type="VEuPathDB" id="HostDB:ENSG00000132205"/>
<dbReference type="eggNOG" id="ENOG502QV5P">
    <property type="taxonomic scope" value="Eukaryota"/>
</dbReference>
<dbReference type="GeneTree" id="ENSGT01030000234633"/>
<dbReference type="HOGENOM" id="CLU_011705_0_0_1"/>
<dbReference type="InParanoid" id="Q9BXX0"/>
<dbReference type="OMA" id="SAQPNCC"/>
<dbReference type="OrthoDB" id="9944757at2759"/>
<dbReference type="PAN-GO" id="Q9BXX0">
    <property type="GO annotations" value="0 GO annotations based on evolutionary models"/>
</dbReference>
<dbReference type="PhylomeDB" id="Q9BXX0"/>
<dbReference type="TreeFam" id="TF331033"/>
<dbReference type="PathwayCommons" id="Q9BXX0"/>
<dbReference type="Reactome" id="R-HSA-2129379">
    <property type="pathway name" value="Molecules associated with elastic fibres"/>
</dbReference>
<dbReference type="SignaLink" id="Q9BXX0"/>
<dbReference type="BioGRID-ORCS" id="84034">
    <property type="hits" value="8 hits in 1146 CRISPR screens"/>
</dbReference>
<dbReference type="ChiTaRS" id="EMILIN2">
    <property type="organism name" value="human"/>
</dbReference>
<dbReference type="GenomeRNAi" id="84034"/>
<dbReference type="Pharos" id="Q9BXX0">
    <property type="development level" value="Tbio"/>
</dbReference>
<dbReference type="PRO" id="PR:Q9BXX0"/>
<dbReference type="Proteomes" id="UP000005640">
    <property type="component" value="Chromosome 18"/>
</dbReference>
<dbReference type="RNAct" id="Q9BXX0">
    <property type="molecule type" value="protein"/>
</dbReference>
<dbReference type="Bgee" id="ENSG00000132205">
    <property type="expression patterns" value="Expressed in decidua and 138 other cell types or tissues"/>
</dbReference>
<dbReference type="GO" id="GO:0005581">
    <property type="term" value="C:collagen trimer"/>
    <property type="evidence" value="ECO:0007669"/>
    <property type="project" value="UniProtKB-KW"/>
</dbReference>
<dbReference type="GO" id="GO:0062023">
    <property type="term" value="C:collagen-containing extracellular matrix"/>
    <property type="evidence" value="ECO:0007005"/>
    <property type="project" value="UniProtKB"/>
</dbReference>
<dbReference type="GO" id="GO:1990971">
    <property type="term" value="C:EMILIN complex"/>
    <property type="evidence" value="ECO:0000250"/>
    <property type="project" value="ComplexPortal"/>
</dbReference>
<dbReference type="GO" id="GO:0005576">
    <property type="term" value="C:extracellular region"/>
    <property type="evidence" value="ECO:0000314"/>
    <property type="project" value="UniProtKB"/>
</dbReference>
<dbReference type="GO" id="GO:0030023">
    <property type="term" value="F:extracellular matrix constituent conferring elasticity"/>
    <property type="evidence" value="ECO:0000303"/>
    <property type="project" value="UniProtKB"/>
</dbReference>
<dbReference type="GO" id="GO:0033627">
    <property type="term" value="P:cell adhesion mediated by integrin"/>
    <property type="evidence" value="ECO:0000250"/>
    <property type="project" value="ComplexPortal"/>
</dbReference>
<dbReference type="GO" id="GO:0030336">
    <property type="term" value="P:negative regulation of cell migration"/>
    <property type="evidence" value="ECO:0000314"/>
    <property type="project" value="ComplexPortal"/>
</dbReference>
<dbReference type="GO" id="GO:0045766">
    <property type="term" value="P:positive regulation of angiogenesis"/>
    <property type="evidence" value="ECO:0000314"/>
    <property type="project" value="ComplexPortal"/>
</dbReference>
<dbReference type="GO" id="GO:0043065">
    <property type="term" value="P:positive regulation of apoptotic process"/>
    <property type="evidence" value="ECO:0000314"/>
    <property type="project" value="ComplexPortal"/>
</dbReference>
<dbReference type="GO" id="GO:0030194">
    <property type="term" value="P:positive regulation of blood coagulation"/>
    <property type="evidence" value="ECO:0000266"/>
    <property type="project" value="ComplexPortal"/>
</dbReference>
<dbReference type="GO" id="GO:1900426">
    <property type="term" value="P:positive regulation of defense response to bacterium"/>
    <property type="evidence" value="ECO:0000314"/>
    <property type="project" value="ComplexPortal"/>
</dbReference>
<dbReference type="GO" id="GO:1901731">
    <property type="term" value="P:positive regulation of platelet aggregation"/>
    <property type="evidence" value="ECO:0000314"/>
    <property type="project" value="ComplexPortal"/>
</dbReference>
<dbReference type="GO" id="GO:0008217">
    <property type="term" value="P:regulation of blood pressure"/>
    <property type="evidence" value="ECO:0000250"/>
    <property type="project" value="ComplexPortal"/>
</dbReference>
<dbReference type="GO" id="GO:0042127">
    <property type="term" value="P:regulation of cell population proliferation"/>
    <property type="evidence" value="ECO:0000250"/>
    <property type="project" value="ComplexPortal"/>
</dbReference>
<dbReference type="FunFam" id="2.60.120.40:FF:000011">
    <property type="entry name" value="Elastin microfibril interfacer 2"/>
    <property type="match status" value="1"/>
</dbReference>
<dbReference type="Gene3D" id="1.10.287.1490">
    <property type="match status" value="1"/>
</dbReference>
<dbReference type="Gene3D" id="1.20.58.60">
    <property type="match status" value="1"/>
</dbReference>
<dbReference type="Gene3D" id="2.60.120.40">
    <property type="match status" value="1"/>
</dbReference>
<dbReference type="InterPro" id="IPR001073">
    <property type="entry name" value="C1q_dom"/>
</dbReference>
<dbReference type="InterPro" id="IPR050392">
    <property type="entry name" value="Collagen/C1q_domain"/>
</dbReference>
<dbReference type="InterPro" id="IPR011489">
    <property type="entry name" value="EMI_domain"/>
</dbReference>
<dbReference type="InterPro" id="IPR008983">
    <property type="entry name" value="Tumour_necrosis_fac-like_dom"/>
</dbReference>
<dbReference type="PANTHER" id="PTHR15427">
    <property type="entry name" value="EMILIN ELASTIN MICROFIBRIL INTERFACE-LOCATED PROTEIN ELASTIN MICROFIBRIL INTERFACER"/>
    <property type="match status" value="1"/>
</dbReference>
<dbReference type="PANTHER" id="PTHR15427:SF5">
    <property type="entry name" value="EMILIN-2"/>
    <property type="match status" value="1"/>
</dbReference>
<dbReference type="Pfam" id="PF00386">
    <property type="entry name" value="C1q"/>
    <property type="match status" value="1"/>
</dbReference>
<dbReference type="Pfam" id="PF07546">
    <property type="entry name" value="EMI"/>
    <property type="match status" value="1"/>
</dbReference>
<dbReference type="SMART" id="SM00110">
    <property type="entry name" value="C1Q"/>
    <property type="match status" value="1"/>
</dbReference>
<dbReference type="SUPFAM" id="SSF49842">
    <property type="entry name" value="TNF-like"/>
    <property type="match status" value="1"/>
</dbReference>
<dbReference type="PROSITE" id="PS50871">
    <property type="entry name" value="C1Q"/>
    <property type="match status" value="1"/>
</dbReference>
<dbReference type="PROSITE" id="PS51041">
    <property type="entry name" value="EMI"/>
    <property type="match status" value="1"/>
</dbReference>
<protein>
    <recommendedName>
        <fullName>EMILIN-2</fullName>
    </recommendedName>
    <alternativeName>
        <fullName>Elastin microfibril interface-located protein 2</fullName>
        <shortName>Elastin microfibril interfacer 2</shortName>
    </alternativeName>
    <alternativeName>
        <fullName>Protein FOAP-10</fullName>
    </alternativeName>
</protein>
<gene>
    <name type="primary">EMILIN2</name>
</gene>
<accession>Q9BXX0</accession>
<accession>B2RMY3</accession>
<accession>Q8NBH3</accession>
<accession>Q96JQ4</accession>
<comment type="function">
    <text>May be responsible for anchoring smooth muscle cells to elastic fibers, and may be involved not only in the formation of the elastic fiber, but also in the processes that regulate vessel assembly. Has cell adhesive capacity.</text>
</comment>
<comment type="subunit">
    <text evidence="1">Homotrimer associated through a moderately stable interaction of the C-terminal globular C1q domains, allowing the nucleation of the triple helix and then a further quaternary assembly to higher-order polymers via intermolecular disulfide bonds (By similarity). Interacts with EMILIN1.</text>
</comment>
<comment type="subcellular location">
    <subcellularLocation>
        <location>Secreted</location>
        <location>Extracellular space</location>
        <location>Extracellular matrix</location>
    </subcellularLocation>
    <text>Found mainly at the interface between amorphous elastin and microfibrils.</text>
</comment>
<comment type="tissue specificity">
    <text>Highest levels are present in fetal heart and adult lung. Intermediate levels in peripheral leukocytes, placenta, and spinal cord and low expression in fetal brain, spleen, thymus, and lung and in adult heart, aorta, testis, bone marrow, small intestine, thymus, lymph node, and appendix.</text>
</comment>
<reference key="1">
    <citation type="journal article" date="2001" name="J. Biol. Chem.">
        <title>Isolation and characterization of EMILIN-2, a new component of the growing EMILINs family and a member of the EMI domain-containing superfamily.</title>
        <authorList>
            <person name="Doliana R."/>
            <person name="Bot S."/>
            <person name="Mungiguerra G."/>
            <person name="Canton A."/>
            <person name="Cilli S.P."/>
            <person name="Colombatti A."/>
        </authorList>
    </citation>
    <scope>NUCLEOTIDE SEQUENCE [MRNA]</scope>
    <scope>VARIANT SER-903</scope>
    <source>
        <tissue>Kidney</tissue>
    </source>
</reference>
<reference key="2">
    <citation type="journal article" date="2005" name="Nature">
        <title>DNA sequence and analysis of human chromosome 18.</title>
        <authorList>
            <person name="Nusbaum C."/>
            <person name="Zody M.C."/>
            <person name="Borowsky M.L."/>
            <person name="Kamal M."/>
            <person name="Kodira C.D."/>
            <person name="Taylor T.D."/>
            <person name="Whittaker C.A."/>
            <person name="Chang J.L."/>
            <person name="Cuomo C.A."/>
            <person name="Dewar K."/>
            <person name="FitzGerald M.G."/>
            <person name="Yang X."/>
            <person name="Abouelleil A."/>
            <person name="Allen N.R."/>
            <person name="Anderson S."/>
            <person name="Bloom T."/>
            <person name="Bugalter B."/>
            <person name="Butler J."/>
            <person name="Cook A."/>
            <person name="DeCaprio D."/>
            <person name="Engels R."/>
            <person name="Garber M."/>
            <person name="Gnirke A."/>
            <person name="Hafez N."/>
            <person name="Hall J.L."/>
            <person name="Norman C.H."/>
            <person name="Itoh T."/>
            <person name="Jaffe D.B."/>
            <person name="Kuroki Y."/>
            <person name="Lehoczky J."/>
            <person name="Lui A."/>
            <person name="Macdonald P."/>
            <person name="Mauceli E."/>
            <person name="Mikkelsen T.S."/>
            <person name="Naylor J.W."/>
            <person name="Nicol R."/>
            <person name="Nguyen C."/>
            <person name="Noguchi H."/>
            <person name="O'Leary S.B."/>
            <person name="Piqani B."/>
            <person name="Smith C.L."/>
            <person name="Talamas J.A."/>
            <person name="Topham K."/>
            <person name="Totoki Y."/>
            <person name="Toyoda A."/>
            <person name="Wain H.M."/>
            <person name="Young S.K."/>
            <person name="Zeng Q."/>
            <person name="Zimmer A.R."/>
            <person name="Fujiyama A."/>
            <person name="Hattori M."/>
            <person name="Birren B.W."/>
            <person name="Sakaki Y."/>
            <person name="Lander E.S."/>
        </authorList>
    </citation>
    <scope>NUCLEOTIDE SEQUENCE [LARGE SCALE GENOMIC DNA]</scope>
</reference>
<reference key="3">
    <citation type="submission" date="2005-09" db="EMBL/GenBank/DDBJ databases">
        <authorList>
            <person name="Mural R.J."/>
            <person name="Istrail S."/>
            <person name="Sutton G.G."/>
            <person name="Florea L."/>
            <person name="Halpern A.L."/>
            <person name="Mobarry C.M."/>
            <person name="Lippert R."/>
            <person name="Walenz B."/>
            <person name="Shatkay H."/>
            <person name="Dew I."/>
            <person name="Miller J.R."/>
            <person name="Flanigan M.J."/>
            <person name="Edwards N.J."/>
            <person name="Bolanos R."/>
            <person name="Fasulo D."/>
            <person name="Halldorsson B.V."/>
            <person name="Hannenhalli S."/>
            <person name="Turner R."/>
            <person name="Yooseph S."/>
            <person name="Lu F."/>
            <person name="Nusskern D.R."/>
            <person name="Shue B.C."/>
            <person name="Zheng X.H."/>
            <person name="Zhong F."/>
            <person name="Delcher A.L."/>
            <person name="Huson D.H."/>
            <person name="Kravitz S.A."/>
            <person name="Mouchard L."/>
            <person name="Reinert K."/>
            <person name="Remington K.A."/>
            <person name="Clark A.G."/>
            <person name="Waterman M.S."/>
            <person name="Eichler E.E."/>
            <person name="Adams M.D."/>
            <person name="Hunkapiller M.W."/>
            <person name="Myers E.W."/>
            <person name="Venter J.C."/>
        </authorList>
    </citation>
    <scope>NUCLEOTIDE SEQUENCE [LARGE SCALE GENOMIC DNA]</scope>
</reference>
<reference key="4">
    <citation type="journal article" date="2004" name="Genome Res.">
        <title>The status, quality, and expansion of the NIH full-length cDNA project: the Mammalian Gene Collection (MGC).</title>
        <authorList>
            <consortium name="The MGC Project Team"/>
        </authorList>
    </citation>
    <scope>NUCLEOTIDE SEQUENCE [LARGE SCALE MRNA]</scope>
</reference>
<reference key="5">
    <citation type="journal article" date="2004" name="Nat. Genet.">
        <title>Complete sequencing and characterization of 21,243 full-length human cDNAs.</title>
        <authorList>
            <person name="Ota T."/>
            <person name="Suzuki Y."/>
            <person name="Nishikawa T."/>
            <person name="Otsuki T."/>
            <person name="Sugiyama T."/>
            <person name="Irie R."/>
            <person name="Wakamatsu A."/>
            <person name="Hayashi K."/>
            <person name="Sato H."/>
            <person name="Nagai K."/>
            <person name="Kimura K."/>
            <person name="Makita H."/>
            <person name="Sekine M."/>
            <person name="Obayashi M."/>
            <person name="Nishi T."/>
            <person name="Shibahara T."/>
            <person name="Tanaka T."/>
            <person name="Ishii S."/>
            <person name="Yamamoto J."/>
            <person name="Saito K."/>
            <person name="Kawai Y."/>
            <person name="Isono Y."/>
            <person name="Nakamura Y."/>
            <person name="Nagahari K."/>
            <person name="Murakami K."/>
            <person name="Yasuda T."/>
            <person name="Iwayanagi T."/>
            <person name="Wagatsuma M."/>
            <person name="Shiratori A."/>
            <person name="Sudo H."/>
            <person name="Hosoiri T."/>
            <person name="Kaku Y."/>
            <person name="Kodaira H."/>
            <person name="Kondo H."/>
            <person name="Sugawara M."/>
            <person name="Takahashi M."/>
            <person name="Kanda K."/>
            <person name="Yokoi T."/>
            <person name="Furuya T."/>
            <person name="Kikkawa E."/>
            <person name="Omura Y."/>
            <person name="Abe K."/>
            <person name="Kamihara K."/>
            <person name="Katsuta N."/>
            <person name="Sato K."/>
            <person name="Tanikawa M."/>
            <person name="Yamazaki M."/>
            <person name="Ninomiya K."/>
            <person name="Ishibashi T."/>
            <person name="Yamashita H."/>
            <person name="Murakawa K."/>
            <person name="Fujimori K."/>
            <person name="Tanai H."/>
            <person name="Kimata M."/>
            <person name="Watanabe M."/>
            <person name="Hiraoka S."/>
            <person name="Chiba Y."/>
            <person name="Ishida S."/>
            <person name="Ono Y."/>
            <person name="Takiguchi S."/>
            <person name="Watanabe S."/>
            <person name="Yosida M."/>
            <person name="Hotuta T."/>
            <person name="Kusano J."/>
            <person name="Kanehori K."/>
            <person name="Takahashi-Fujii A."/>
            <person name="Hara H."/>
            <person name="Tanase T.-O."/>
            <person name="Nomura Y."/>
            <person name="Togiya S."/>
            <person name="Komai F."/>
            <person name="Hara R."/>
            <person name="Takeuchi K."/>
            <person name="Arita M."/>
            <person name="Imose N."/>
            <person name="Musashino K."/>
            <person name="Yuuki H."/>
            <person name="Oshima A."/>
            <person name="Sasaki N."/>
            <person name="Aotsuka S."/>
            <person name="Yoshikawa Y."/>
            <person name="Matsunawa H."/>
            <person name="Ichihara T."/>
            <person name="Shiohata N."/>
            <person name="Sano S."/>
            <person name="Moriya S."/>
            <person name="Momiyama H."/>
            <person name="Satoh N."/>
            <person name="Takami S."/>
            <person name="Terashima Y."/>
            <person name="Suzuki O."/>
            <person name="Nakagawa S."/>
            <person name="Senoh A."/>
            <person name="Mizoguchi H."/>
            <person name="Goto Y."/>
            <person name="Shimizu F."/>
            <person name="Wakebe H."/>
            <person name="Hishigaki H."/>
            <person name="Watanabe T."/>
            <person name="Sugiyama A."/>
            <person name="Takemoto M."/>
            <person name="Kawakami B."/>
            <person name="Yamazaki M."/>
            <person name="Watanabe K."/>
            <person name="Kumagai A."/>
            <person name="Itakura S."/>
            <person name="Fukuzumi Y."/>
            <person name="Fujimori Y."/>
            <person name="Komiyama M."/>
            <person name="Tashiro H."/>
            <person name="Tanigami A."/>
            <person name="Fujiwara T."/>
            <person name="Ono T."/>
            <person name="Yamada K."/>
            <person name="Fujii Y."/>
            <person name="Ozaki K."/>
            <person name="Hirao M."/>
            <person name="Ohmori Y."/>
            <person name="Kawabata A."/>
            <person name="Hikiji T."/>
            <person name="Kobatake N."/>
            <person name="Inagaki H."/>
            <person name="Ikema Y."/>
            <person name="Okamoto S."/>
            <person name="Okitani R."/>
            <person name="Kawakami T."/>
            <person name="Noguchi S."/>
            <person name="Itoh T."/>
            <person name="Shigeta K."/>
            <person name="Senba T."/>
            <person name="Matsumura K."/>
            <person name="Nakajima Y."/>
            <person name="Mizuno T."/>
            <person name="Morinaga M."/>
            <person name="Sasaki M."/>
            <person name="Togashi T."/>
            <person name="Oyama M."/>
            <person name="Hata H."/>
            <person name="Watanabe M."/>
            <person name="Komatsu T."/>
            <person name="Mizushima-Sugano J."/>
            <person name="Satoh T."/>
            <person name="Shirai Y."/>
            <person name="Takahashi Y."/>
            <person name="Nakagawa K."/>
            <person name="Okumura K."/>
            <person name="Nagase T."/>
            <person name="Nomura N."/>
            <person name="Kikuchi H."/>
            <person name="Masuho Y."/>
            <person name="Yamashita R."/>
            <person name="Nakai K."/>
            <person name="Yada T."/>
            <person name="Nakamura Y."/>
            <person name="Ohara O."/>
            <person name="Isogai T."/>
            <person name="Sugano S."/>
        </authorList>
    </citation>
    <scope>NUCLEOTIDE SEQUENCE [LARGE SCALE MRNA] OF 590-1053</scope>
    <source>
        <tissue>Adrenal gland</tissue>
    </source>
</reference>
<reference key="6">
    <citation type="submission" date="1999-04" db="EMBL/GenBank/DDBJ databases">
        <title>Homo sapiens mRNA for FOAP-10 protein, partial cds.</title>
        <authorList>
            <person name="Fujii Y."/>
            <person name="Takayama K."/>
            <person name="Tsuritani K."/>
            <person name="Yajima Y."/>
            <person name="Amemiya T."/>
            <person name="Ukai Y."/>
            <person name="Naito K."/>
            <person name="Kawaguchi A."/>
        </authorList>
    </citation>
    <scope>NUCLEOTIDE SEQUENCE [MRNA] OF 846-1053</scope>
    <source>
        <tissue>Macrophage</tissue>
    </source>
</reference>
<reference key="7">
    <citation type="journal article" date="2009" name="J. Proteome Res.">
        <title>Glycoproteomics analysis of human liver tissue by combination of multiple enzyme digestion and hydrazide chemistry.</title>
        <authorList>
            <person name="Chen R."/>
            <person name="Jiang X."/>
            <person name="Sun D."/>
            <person name="Han G."/>
            <person name="Wang F."/>
            <person name="Ye M."/>
            <person name="Wang L."/>
            <person name="Zou H."/>
        </authorList>
    </citation>
    <scope>GLYCOSYLATION [LARGE SCALE ANALYSIS] AT ASN-616</scope>
    <source>
        <tissue>Liver</tissue>
    </source>
</reference>
<proteinExistence type="evidence at protein level"/>
<feature type="signal peptide" evidence="2">
    <location>
        <begin position="1"/>
        <end position="30"/>
    </location>
</feature>
<feature type="chain" id="PRO_0000007817" description="EMILIN-2">
    <location>
        <begin position="31"/>
        <end position="1053"/>
    </location>
</feature>
<feature type="domain" description="EMI" evidence="4">
    <location>
        <begin position="44"/>
        <end position="120"/>
    </location>
</feature>
<feature type="domain" description="Collagen-like">
    <location>
        <begin position="840"/>
        <end position="892"/>
    </location>
</feature>
<feature type="domain" description="C1q" evidence="3">
    <location>
        <begin position="901"/>
        <end position="1052"/>
    </location>
</feature>
<feature type="region of interest" description="Disordered" evidence="5">
    <location>
        <begin position="120"/>
        <end position="179"/>
    </location>
</feature>
<feature type="region of interest" description="Disordered" evidence="5">
    <location>
        <begin position="212"/>
        <end position="256"/>
    </location>
</feature>
<feature type="region of interest" description="Disordered" evidence="5">
    <location>
        <begin position="783"/>
        <end position="901"/>
    </location>
</feature>
<feature type="coiled-coil region" evidence="2">
    <location>
        <begin position="177"/>
        <end position="215"/>
    </location>
</feature>
<feature type="coiled-coil region" evidence="2">
    <location>
        <begin position="253"/>
        <end position="340"/>
    </location>
</feature>
<feature type="coiled-coil region" evidence="2">
    <location>
        <begin position="369"/>
        <end position="389"/>
    </location>
</feature>
<feature type="coiled-coil region" evidence="2">
    <location>
        <begin position="578"/>
        <end position="634"/>
    </location>
</feature>
<feature type="compositionally biased region" description="Polar residues" evidence="5">
    <location>
        <begin position="146"/>
        <end position="166"/>
    </location>
</feature>
<feature type="compositionally biased region" description="Basic and acidic residues" evidence="5">
    <location>
        <begin position="212"/>
        <end position="222"/>
    </location>
</feature>
<feature type="compositionally biased region" description="Polar residues" evidence="5">
    <location>
        <begin position="228"/>
        <end position="256"/>
    </location>
</feature>
<feature type="compositionally biased region" description="Pro residues" evidence="5">
    <location>
        <begin position="789"/>
        <end position="812"/>
    </location>
</feature>
<feature type="glycosylation site" description="N-linked (GlcNAc...) asparagine" evidence="2">
    <location>
        <position position="55"/>
    </location>
</feature>
<feature type="glycosylation site" description="N-linked (GlcNAc...) asparagine" evidence="2">
    <location>
        <position position="275"/>
    </location>
</feature>
<feature type="glycosylation site" description="N-linked (GlcNAc...) asparagine" evidence="2">
    <location>
        <position position="458"/>
    </location>
</feature>
<feature type="glycosylation site" description="N-linked (GlcNAc...) asparagine" evidence="2">
    <location>
        <position position="510"/>
    </location>
</feature>
<feature type="glycosylation site" description="N-linked (GlcNAc...) asparagine" evidence="2">
    <location>
        <position position="587"/>
    </location>
</feature>
<feature type="glycosylation site" description="N-linked (GlcNAc...) asparagine" evidence="7">
    <location>
        <position position="616"/>
    </location>
</feature>
<feature type="glycosylation site" description="N-linked (GlcNAc...) asparagine" evidence="2">
    <location>
        <position position="745"/>
    </location>
</feature>
<feature type="glycosylation site" description="N-linked (GlcNAc...) asparagine" evidence="2">
    <location>
        <position position="974"/>
    </location>
</feature>
<feature type="disulfide bond" evidence="4">
    <location>
        <begin position="48"/>
        <end position="110"/>
    </location>
</feature>
<feature type="disulfide bond" evidence="4">
    <location>
        <begin position="74"/>
        <end position="81"/>
    </location>
</feature>
<feature type="disulfide bond" evidence="4">
    <location>
        <begin position="109"/>
        <end position="118"/>
    </location>
</feature>
<feature type="sequence variant" id="VAR_057528" description="In dbSNP:rs16943977.">
    <original>A</original>
    <variation>T</variation>
    <location>
        <position position="215"/>
    </location>
</feature>
<feature type="sequence variant" id="VAR_057529" description="In dbSNP:rs35267664.">
    <original>M</original>
    <variation>V</variation>
    <location>
        <position position="259"/>
    </location>
</feature>
<feature type="sequence variant" id="VAR_062003" description="In dbSNP:rs56288451." evidence="6">
    <original>P</original>
    <variation>S</variation>
    <location>
        <position position="903"/>
    </location>
</feature>
<feature type="sequence conflict" description="In Ref. 1; AAK37963." evidence="8" ref="1">
    <original>K</original>
    <variation>G</variation>
    <location>
        <position position="545"/>
    </location>
</feature>